<reference key="1">
    <citation type="journal article" date="2003" name="Proc. Natl. Acad. Sci. U.S.A.">
        <title>The complete genome sequence of the Arabidopsis and tomato pathogen Pseudomonas syringae pv. tomato DC3000.</title>
        <authorList>
            <person name="Buell C.R."/>
            <person name="Joardar V."/>
            <person name="Lindeberg M."/>
            <person name="Selengut J."/>
            <person name="Paulsen I.T."/>
            <person name="Gwinn M.L."/>
            <person name="Dodson R.J."/>
            <person name="DeBoy R.T."/>
            <person name="Durkin A.S."/>
            <person name="Kolonay J.F."/>
            <person name="Madupu R."/>
            <person name="Daugherty S.C."/>
            <person name="Brinkac L.M."/>
            <person name="Beanan M.J."/>
            <person name="Haft D.H."/>
            <person name="Nelson W.C."/>
            <person name="Davidsen T.M."/>
            <person name="Zafar N."/>
            <person name="Zhou L."/>
            <person name="Liu J."/>
            <person name="Yuan Q."/>
            <person name="Khouri H.M."/>
            <person name="Fedorova N.B."/>
            <person name="Tran B."/>
            <person name="Russell D."/>
            <person name="Berry K.J."/>
            <person name="Utterback T.R."/>
            <person name="Van Aken S.E."/>
            <person name="Feldblyum T.V."/>
            <person name="D'Ascenzo M."/>
            <person name="Deng W.-L."/>
            <person name="Ramos A.R."/>
            <person name="Alfano J.R."/>
            <person name="Cartinhour S."/>
            <person name="Chatterjee A.K."/>
            <person name="Delaney T.P."/>
            <person name="Lazarowitz S.G."/>
            <person name="Martin G.B."/>
            <person name="Schneider D.J."/>
            <person name="Tang X."/>
            <person name="Bender C.L."/>
            <person name="White O."/>
            <person name="Fraser C.M."/>
            <person name="Collmer A."/>
        </authorList>
    </citation>
    <scope>NUCLEOTIDE SEQUENCE [LARGE SCALE GENOMIC DNA]</scope>
    <source>
        <strain>ATCC BAA-871 / DC3000</strain>
    </source>
</reference>
<dbReference type="EC" id="4.2.1.49" evidence="1"/>
<dbReference type="EMBL" id="AE016853">
    <property type="protein sequence ID" value="AAO58696.1"/>
    <property type="status" value="ALT_INIT"/>
    <property type="molecule type" value="Genomic_DNA"/>
</dbReference>
<dbReference type="RefSeq" id="NP_795001.1">
    <property type="nucleotide sequence ID" value="NC_004578.1"/>
</dbReference>
<dbReference type="RefSeq" id="WP_057443298.1">
    <property type="nucleotide sequence ID" value="NC_004578.1"/>
</dbReference>
<dbReference type="SMR" id="Q87UM6"/>
<dbReference type="STRING" id="223283.PSPTO_5270"/>
<dbReference type="GeneID" id="1186955"/>
<dbReference type="KEGG" id="pst:PSPTO_5270"/>
<dbReference type="PATRIC" id="fig|223283.9.peg.5394"/>
<dbReference type="eggNOG" id="COG2987">
    <property type="taxonomic scope" value="Bacteria"/>
</dbReference>
<dbReference type="HOGENOM" id="CLU_018868_0_1_6"/>
<dbReference type="OrthoDB" id="9764874at2"/>
<dbReference type="UniPathway" id="UPA00379">
    <property type="reaction ID" value="UER00550"/>
</dbReference>
<dbReference type="Proteomes" id="UP000002515">
    <property type="component" value="Chromosome"/>
</dbReference>
<dbReference type="GO" id="GO:0005737">
    <property type="term" value="C:cytoplasm"/>
    <property type="evidence" value="ECO:0007669"/>
    <property type="project" value="UniProtKB-SubCell"/>
</dbReference>
<dbReference type="GO" id="GO:0016153">
    <property type="term" value="F:urocanate hydratase activity"/>
    <property type="evidence" value="ECO:0007669"/>
    <property type="project" value="UniProtKB-UniRule"/>
</dbReference>
<dbReference type="GO" id="GO:0019556">
    <property type="term" value="P:L-histidine catabolic process to glutamate and formamide"/>
    <property type="evidence" value="ECO:0007669"/>
    <property type="project" value="UniProtKB-UniPathway"/>
</dbReference>
<dbReference type="GO" id="GO:0019557">
    <property type="term" value="P:L-histidine catabolic process to glutamate and formate"/>
    <property type="evidence" value="ECO:0007669"/>
    <property type="project" value="UniProtKB-UniPathway"/>
</dbReference>
<dbReference type="FunFam" id="3.40.50.10730:FF:000001">
    <property type="entry name" value="Urocanate hydratase"/>
    <property type="match status" value="1"/>
</dbReference>
<dbReference type="Gene3D" id="3.40.50.10730">
    <property type="entry name" value="Urocanase like domains"/>
    <property type="match status" value="1"/>
</dbReference>
<dbReference type="Gene3D" id="3.40.1770.10">
    <property type="entry name" value="Urocanase superfamily"/>
    <property type="match status" value="1"/>
</dbReference>
<dbReference type="HAMAP" id="MF_00577">
    <property type="entry name" value="HutU"/>
    <property type="match status" value="1"/>
</dbReference>
<dbReference type="InterPro" id="IPR055351">
    <property type="entry name" value="Urocanase"/>
</dbReference>
<dbReference type="InterPro" id="IPR023637">
    <property type="entry name" value="Urocanase-like"/>
</dbReference>
<dbReference type="InterPro" id="IPR035401">
    <property type="entry name" value="Urocanase_C"/>
</dbReference>
<dbReference type="InterPro" id="IPR038364">
    <property type="entry name" value="Urocanase_central_sf"/>
</dbReference>
<dbReference type="InterPro" id="IPR023636">
    <property type="entry name" value="Urocanase_CS"/>
</dbReference>
<dbReference type="InterPro" id="IPR035400">
    <property type="entry name" value="Urocanase_N"/>
</dbReference>
<dbReference type="InterPro" id="IPR035085">
    <property type="entry name" value="Urocanase_Rossmann-like"/>
</dbReference>
<dbReference type="InterPro" id="IPR036190">
    <property type="entry name" value="Urocanase_sf"/>
</dbReference>
<dbReference type="NCBIfam" id="TIGR01228">
    <property type="entry name" value="hutU"/>
    <property type="match status" value="1"/>
</dbReference>
<dbReference type="NCBIfam" id="NF003820">
    <property type="entry name" value="PRK05414.1"/>
    <property type="match status" value="1"/>
</dbReference>
<dbReference type="PANTHER" id="PTHR12216">
    <property type="entry name" value="UROCANATE HYDRATASE"/>
    <property type="match status" value="1"/>
</dbReference>
<dbReference type="PANTHER" id="PTHR12216:SF4">
    <property type="entry name" value="UROCANATE HYDRATASE"/>
    <property type="match status" value="1"/>
</dbReference>
<dbReference type="Pfam" id="PF01175">
    <property type="entry name" value="Urocanase"/>
    <property type="match status" value="1"/>
</dbReference>
<dbReference type="Pfam" id="PF17392">
    <property type="entry name" value="Urocanase_C"/>
    <property type="match status" value="1"/>
</dbReference>
<dbReference type="Pfam" id="PF17391">
    <property type="entry name" value="Urocanase_N"/>
    <property type="match status" value="1"/>
</dbReference>
<dbReference type="PIRSF" id="PIRSF001423">
    <property type="entry name" value="Urocanate_hydrat"/>
    <property type="match status" value="1"/>
</dbReference>
<dbReference type="SUPFAM" id="SSF111326">
    <property type="entry name" value="Urocanase"/>
    <property type="match status" value="1"/>
</dbReference>
<dbReference type="PROSITE" id="PS01233">
    <property type="entry name" value="UROCANASE"/>
    <property type="match status" value="1"/>
</dbReference>
<feature type="chain" id="PRO_0000207346" description="Urocanate hydratase">
    <location>
        <begin position="1"/>
        <end position="565"/>
    </location>
</feature>
<feature type="region of interest" description="Disordered" evidence="2">
    <location>
        <begin position="453"/>
        <end position="472"/>
    </location>
</feature>
<feature type="compositionally biased region" description="Basic and acidic residues" evidence="2">
    <location>
        <begin position="463"/>
        <end position="472"/>
    </location>
</feature>
<feature type="active site" evidence="1">
    <location>
        <position position="419"/>
    </location>
</feature>
<feature type="binding site" evidence="1">
    <location>
        <begin position="61"/>
        <end position="62"/>
    </location>
    <ligand>
        <name>NAD(+)</name>
        <dbReference type="ChEBI" id="CHEBI:57540"/>
    </ligand>
</feature>
<feature type="binding site" evidence="1">
    <location>
        <position position="139"/>
    </location>
    <ligand>
        <name>NAD(+)</name>
        <dbReference type="ChEBI" id="CHEBI:57540"/>
    </ligand>
</feature>
<feature type="binding site" evidence="1">
    <location>
        <begin position="185"/>
        <end position="187"/>
    </location>
    <ligand>
        <name>NAD(+)</name>
        <dbReference type="ChEBI" id="CHEBI:57540"/>
    </ligand>
</feature>
<feature type="binding site" evidence="1">
    <location>
        <position position="205"/>
    </location>
    <ligand>
        <name>NAD(+)</name>
        <dbReference type="ChEBI" id="CHEBI:57540"/>
    </ligand>
</feature>
<feature type="binding site" evidence="1">
    <location>
        <position position="210"/>
    </location>
    <ligand>
        <name>NAD(+)</name>
        <dbReference type="ChEBI" id="CHEBI:57540"/>
    </ligand>
</feature>
<feature type="binding site" evidence="1">
    <location>
        <begin position="251"/>
        <end position="252"/>
    </location>
    <ligand>
        <name>NAD(+)</name>
        <dbReference type="ChEBI" id="CHEBI:57540"/>
    </ligand>
</feature>
<feature type="binding site" evidence="1">
    <location>
        <begin position="272"/>
        <end position="276"/>
    </location>
    <ligand>
        <name>NAD(+)</name>
        <dbReference type="ChEBI" id="CHEBI:57540"/>
    </ligand>
</feature>
<feature type="binding site" evidence="1">
    <location>
        <begin position="282"/>
        <end position="283"/>
    </location>
    <ligand>
        <name>NAD(+)</name>
        <dbReference type="ChEBI" id="CHEBI:57540"/>
    </ligand>
</feature>
<feature type="binding site" evidence="1">
    <location>
        <position position="331"/>
    </location>
    <ligand>
        <name>NAD(+)</name>
        <dbReference type="ChEBI" id="CHEBI:57540"/>
    </ligand>
</feature>
<feature type="binding site" evidence="1">
    <location>
        <position position="501"/>
    </location>
    <ligand>
        <name>NAD(+)</name>
        <dbReference type="ChEBI" id="CHEBI:57540"/>
    </ligand>
</feature>
<evidence type="ECO:0000255" key="1">
    <source>
        <dbReference type="HAMAP-Rule" id="MF_00577"/>
    </source>
</evidence>
<evidence type="ECO:0000256" key="2">
    <source>
        <dbReference type="SAM" id="MobiDB-lite"/>
    </source>
</evidence>
<evidence type="ECO:0000305" key="3"/>
<proteinExistence type="inferred from homology"/>
<name>HUTU_PSESM</name>
<accession>Q87UM6</accession>
<sequence length="565" mass="61861">MTENNQDLKQNWTRHREGVVRAARGTQLTAKTWMTEAPLRMLMNNLDPEVAENPNELVVYGGIGRAARNWECYDKIVESLTRLNDDETLLVQSGKPVGVFKTHSNAPRVLIANSNLVPHWASWEHFNELDAKGLAMYGQMTAGSWIYIGSQGIVQGTYETFVEAGRQHYDGNLKGRWVLTAGLGGMGGAQPLAATLAGACSLNIECQQSRIDFRIKTRYVDEQAADLDDALARIAKYTAEGKAISIALCGNAADILPEMVRRGVRPDMVTDQTSAHDPLNGYLPKGWTWDEYRARSVSEPAEVVKAAKQSMAEHVEAMLAFQQAGIPTFDYGNNIRQMAKEVGVSNAFDFPGFVPAYIRPLFCRGIGPFRWAALSGDPQDIYKTDAKVKELIPDDDHLHNWLDMARERISFQGLPARICWVGLGQRAKLGLAFNEMVRSGELSAPVVIGRDHLDSGSVASPNRETESMRDGSDAVSDWPLLNALLNTASGATWVSLHHGGGVGMGFSQHSGMVIVCDGTDEAAERIARVLHNDPATGVMRHADAGYDIAIDCAKEQGLNLPMIGR</sequence>
<organism>
    <name type="scientific">Pseudomonas syringae pv. tomato (strain ATCC BAA-871 / DC3000)</name>
    <dbReference type="NCBI Taxonomy" id="223283"/>
    <lineage>
        <taxon>Bacteria</taxon>
        <taxon>Pseudomonadati</taxon>
        <taxon>Pseudomonadota</taxon>
        <taxon>Gammaproteobacteria</taxon>
        <taxon>Pseudomonadales</taxon>
        <taxon>Pseudomonadaceae</taxon>
        <taxon>Pseudomonas</taxon>
    </lineage>
</organism>
<gene>
    <name evidence="1" type="primary">hutU</name>
    <name type="ordered locus">PSPTO_5270</name>
</gene>
<keyword id="KW-0963">Cytoplasm</keyword>
<keyword id="KW-0369">Histidine metabolism</keyword>
<keyword id="KW-0456">Lyase</keyword>
<keyword id="KW-0520">NAD</keyword>
<keyword id="KW-1185">Reference proteome</keyword>
<comment type="function">
    <text evidence="1">Catalyzes the conversion of urocanate to 4-imidazolone-5-propionate.</text>
</comment>
<comment type="catalytic activity">
    <reaction evidence="1">
        <text>4-imidazolone-5-propanoate = trans-urocanate + H2O</text>
        <dbReference type="Rhea" id="RHEA:13101"/>
        <dbReference type="ChEBI" id="CHEBI:15377"/>
        <dbReference type="ChEBI" id="CHEBI:17771"/>
        <dbReference type="ChEBI" id="CHEBI:77893"/>
        <dbReference type="EC" id="4.2.1.49"/>
    </reaction>
</comment>
<comment type="cofactor">
    <cofactor evidence="1">
        <name>NAD(+)</name>
        <dbReference type="ChEBI" id="CHEBI:57540"/>
    </cofactor>
    <text evidence="1">Binds 1 NAD(+) per subunit.</text>
</comment>
<comment type="pathway">
    <text evidence="1">Amino-acid degradation; L-histidine degradation into L-glutamate; N-formimidoyl-L-glutamate from L-histidine: step 2/3.</text>
</comment>
<comment type="subcellular location">
    <subcellularLocation>
        <location evidence="1">Cytoplasm</location>
    </subcellularLocation>
</comment>
<comment type="similarity">
    <text evidence="1">Belongs to the urocanase family.</text>
</comment>
<comment type="sequence caution" evidence="3">
    <conflict type="erroneous initiation">
        <sequence resource="EMBL-CDS" id="AAO58696"/>
    </conflict>
</comment>
<protein>
    <recommendedName>
        <fullName evidence="1">Urocanate hydratase</fullName>
        <shortName evidence="1">Urocanase</shortName>
        <ecNumber evidence="1">4.2.1.49</ecNumber>
    </recommendedName>
    <alternativeName>
        <fullName evidence="1">Imidazolonepropionate hydrolase</fullName>
    </alternativeName>
</protein>